<keyword id="KW-0997">Cell inner membrane</keyword>
<keyword id="KW-1003">Cell membrane</keyword>
<keyword id="KW-0472">Membrane</keyword>
<keyword id="KW-0812">Transmembrane</keyword>
<keyword id="KW-1133">Transmembrane helix</keyword>
<evidence type="ECO:0000255" key="1">
    <source>
        <dbReference type="HAMAP-Rule" id="MF_01003"/>
    </source>
</evidence>
<organism>
    <name type="scientific">Escherichia coli (strain K12 / MC4100 / BW2952)</name>
    <dbReference type="NCBI Taxonomy" id="595496"/>
    <lineage>
        <taxon>Bacteria</taxon>
        <taxon>Pseudomonadati</taxon>
        <taxon>Pseudomonadota</taxon>
        <taxon>Gammaproteobacteria</taxon>
        <taxon>Enterobacterales</taxon>
        <taxon>Enterobacteriaceae</taxon>
        <taxon>Escherichia</taxon>
    </lineage>
</organism>
<accession>C4ZZ61</accession>
<comment type="function">
    <text evidence="1">Probably involved in the polymerization of enterobacterial common antigen (ECA) trisaccharide repeat units.</text>
</comment>
<comment type="pathway">
    <text evidence="1">Bacterial outer membrane biogenesis; enterobacterial common antigen biosynthesis.</text>
</comment>
<comment type="subunit">
    <text evidence="1">Probably part of a complex composed of WzxE, WzyE and WzzE.</text>
</comment>
<comment type="subcellular location">
    <subcellularLocation>
        <location evidence="1">Cell inner membrane</location>
        <topology evidence="1">Multi-pass membrane protein</topology>
    </subcellularLocation>
</comment>
<comment type="similarity">
    <text evidence="1">Belongs to the WzyE family.</text>
</comment>
<dbReference type="EMBL" id="CP001396">
    <property type="protein sequence ID" value="ACR65260.1"/>
    <property type="molecule type" value="Genomic_DNA"/>
</dbReference>
<dbReference type="RefSeq" id="WP_000055129.1">
    <property type="nucleotide sequence ID" value="NC_012759.1"/>
</dbReference>
<dbReference type="KEGG" id="ebw:BWG_3476"/>
<dbReference type="HOGENOM" id="CLU_049711_0_0_6"/>
<dbReference type="UniPathway" id="UPA00566"/>
<dbReference type="GO" id="GO:0005886">
    <property type="term" value="C:plasma membrane"/>
    <property type="evidence" value="ECO:0007669"/>
    <property type="project" value="UniProtKB-SubCell"/>
</dbReference>
<dbReference type="GO" id="GO:0009246">
    <property type="term" value="P:enterobacterial common antigen biosynthetic process"/>
    <property type="evidence" value="ECO:0007669"/>
    <property type="project" value="UniProtKB-UniRule"/>
</dbReference>
<dbReference type="HAMAP" id="MF_01003">
    <property type="entry name" value="WzyE"/>
    <property type="match status" value="1"/>
</dbReference>
<dbReference type="InterPro" id="IPR010691">
    <property type="entry name" value="WzyE"/>
</dbReference>
<dbReference type="NCBIfam" id="NF002820">
    <property type="entry name" value="PRK02975.1"/>
    <property type="match status" value="1"/>
</dbReference>
<dbReference type="Pfam" id="PF06899">
    <property type="entry name" value="WzyE"/>
    <property type="match status" value="1"/>
</dbReference>
<sequence>MSLLQFSGLFVVWLLCTLFIATLTWFEFRRVRFNFNVFFSLLFLLTFFFGFPLTSVLVFRFDVGVAPPEILLQALLSAGCFYAVYYVTYKTRLRKRVADVPRRPLFTMNRVETNLTWVILMGIALVSVGIFFMHNGFLLFRLNSYSQIFSSEVSGVALKRFFYFFIPAMLVVYFLRQDSKAWLFFLVSTVAFGLLTYMIVGGTRANIIIAFAIFLFIGIIRGWISLWMLAAAGVLGIVGMFWLALKRYGMNVSGDEAFYTFLYLTRDTFSPWENLALLLQNYDNIDFQGLAPIVRDFYVFIPSWLWPGRPSMVLNSANYFTWEVLNNHSGLAISPTLIGSLVVMGGALFIPLGAIVVGLIIKWFDWLYELGNREPNRYKAAILHSFCFGAIFNMIVLAREGLDSFVSRVVFFIVVFGACLMIAKLLYWLFESAGLIHKRTKSSLRTQVEG</sequence>
<name>WZYE_ECOBW</name>
<feature type="chain" id="PRO_1000213141" description="Probable ECA polymerase">
    <location>
        <begin position="1"/>
        <end position="450"/>
    </location>
</feature>
<feature type="transmembrane region" description="Helical" evidence="1">
    <location>
        <begin position="6"/>
        <end position="26"/>
    </location>
</feature>
<feature type="transmembrane region" description="Helical" evidence="1">
    <location>
        <begin position="37"/>
        <end position="57"/>
    </location>
</feature>
<feature type="transmembrane region" description="Helical" evidence="1">
    <location>
        <begin position="63"/>
        <end position="83"/>
    </location>
</feature>
<feature type="transmembrane region" description="Helical" evidence="1">
    <location>
        <begin position="118"/>
        <end position="138"/>
    </location>
</feature>
<feature type="transmembrane region" description="Helical" evidence="1">
    <location>
        <begin position="155"/>
        <end position="175"/>
    </location>
</feature>
<feature type="transmembrane region" description="Helical" evidence="1">
    <location>
        <begin position="181"/>
        <end position="201"/>
    </location>
</feature>
<feature type="transmembrane region" description="Helical" evidence="1">
    <location>
        <begin position="207"/>
        <end position="227"/>
    </location>
</feature>
<feature type="transmembrane region" description="Helical" evidence="1">
    <location>
        <begin position="228"/>
        <end position="248"/>
    </location>
</feature>
<feature type="transmembrane region" description="Helical" evidence="1">
    <location>
        <begin position="341"/>
        <end position="361"/>
    </location>
</feature>
<feature type="transmembrane region" description="Helical" evidence="1">
    <location>
        <begin position="378"/>
        <end position="398"/>
    </location>
</feature>
<feature type="transmembrane region" description="Helical" evidence="1">
    <location>
        <begin position="410"/>
        <end position="430"/>
    </location>
</feature>
<gene>
    <name evidence="1" type="primary">wzyE</name>
    <name type="ordered locus">BWG_3476</name>
</gene>
<protein>
    <recommendedName>
        <fullName evidence="1">Probable ECA polymerase</fullName>
    </recommendedName>
</protein>
<reference key="1">
    <citation type="journal article" date="2009" name="J. Bacteriol.">
        <title>Genomic sequencing reveals regulatory mutations and recombinational events in the widely used MC4100 lineage of Escherichia coli K-12.</title>
        <authorList>
            <person name="Ferenci T."/>
            <person name="Zhou Z."/>
            <person name="Betteridge T."/>
            <person name="Ren Y."/>
            <person name="Liu Y."/>
            <person name="Feng L."/>
            <person name="Reeves P.R."/>
            <person name="Wang L."/>
        </authorList>
    </citation>
    <scope>NUCLEOTIDE SEQUENCE [LARGE SCALE GENOMIC DNA]</scope>
    <source>
        <strain>K12 / MC4100 / BW2952</strain>
    </source>
</reference>
<proteinExistence type="inferred from homology"/>